<dbReference type="EMBL" id="FR796468">
    <property type="protein sequence ID" value="CAM73007.1"/>
    <property type="molecule type" value="Genomic_DNA"/>
</dbReference>
<dbReference type="EMBL" id="FR796468">
    <property type="protein sequence ID" value="CAM73018.1"/>
    <property type="molecule type" value="Genomic_DNA"/>
</dbReference>
<dbReference type="RefSeq" id="XP_001469893.1">
    <property type="nucleotide sequence ID" value="XM_001469856.1"/>
</dbReference>
<dbReference type="RefSeq" id="XP_001469903.1">
    <property type="nucleotide sequence ID" value="XM_001469866.1"/>
</dbReference>
<dbReference type="PDB" id="6AZ1">
    <property type="method" value="EM"/>
    <property type="resolution" value="2.70 A"/>
    <property type="chains" value="B=1-246"/>
</dbReference>
<dbReference type="PDBsum" id="6AZ1"/>
<dbReference type="SMR" id="A4IDS4"/>
<dbReference type="FunCoup" id="A4IDS4">
    <property type="interactions" value="332"/>
</dbReference>
<dbReference type="STRING" id="5671.A4IDS4"/>
<dbReference type="GeneID" id="5073999"/>
<dbReference type="GeneID" id="5074010"/>
<dbReference type="KEGG" id="lif:LINJ_36_5240"/>
<dbReference type="KEGG" id="lif:LINJ_36_5350"/>
<dbReference type="VEuPathDB" id="TriTrypDB:LINF_360060700"/>
<dbReference type="eggNOG" id="KOG0830">
    <property type="taxonomic scope" value="Eukaryota"/>
</dbReference>
<dbReference type="InParanoid" id="A4IDS4"/>
<dbReference type="OMA" id="VKNFFEP"/>
<dbReference type="Proteomes" id="UP000008153">
    <property type="component" value="Chromosome 36"/>
</dbReference>
<dbReference type="GO" id="GO:0022627">
    <property type="term" value="C:cytosolic small ribosomal subunit"/>
    <property type="evidence" value="ECO:0007669"/>
    <property type="project" value="UniProtKB-UniRule"/>
</dbReference>
<dbReference type="GO" id="GO:0003735">
    <property type="term" value="F:structural constituent of ribosome"/>
    <property type="evidence" value="ECO:0007669"/>
    <property type="project" value="UniProtKB-UniRule"/>
</dbReference>
<dbReference type="GO" id="GO:0000028">
    <property type="term" value="P:ribosomal small subunit assembly"/>
    <property type="evidence" value="ECO:0007669"/>
    <property type="project" value="UniProtKB-UniRule"/>
</dbReference>
<dbReference type="GO" id="GO:0006412">
    <property type="term" value="P:translation"/>
    <property type="evidence" value="ECO:0007669"/>
    <property type="project" value="UniProtKB-UniRule"/>
</dbReference>
<dbReference type="CDD" id="cd01425">
    <property type="entry name" value="RPS2"/>
    <property type="match status" value="1"/>
</dbReference>
<dbReference type="FunFam" id="3.40.50.10490:FF:000012">
    <property type="entry name" value="40S ribosomal protein SA"/>
    <property type="match status" value="1"/>
</dbReference>
<dbReference type="Gene3D" id="3.40.50.10490">
    <property type="entry name" value="Glucose-6-phosphate isomerase like protein, domain 1"/>
    <property type="match status" value="1"/>
</dbReference>
<dbReference type="HAMAP" id="MF_03015">
    <property type="entry name" value="Ribosomal_S2_euk"/>
    <property type="match status" value="1"/>
</dbReference>
<dbReference type="InterPro" id="IPR001865">
    <property type="entry name" value="Ribosomal_uS2"/>
</dbReference>
<dbReference type="InterPro" id="IPR018130">
    <property type="entry name" value="Ribosomal_uS2_CS"/>
</dbReference>
<dbReference type="InterPro" id="IPR027498">
    <property type="entry name" value="Ribosomal_uS2_euk"/>
</dbReference>
<dbReference type="InterPro" id="IPR005707">
    <property type="entry name" value="Ribosomal_uS2_euk/arc"/>
</dbReference>
<dbReference type="InterPro" id="IPR023591">
    <property type="entry name" value="Ribosomal_uS2_flav_dom_sf"/>
</dbReference>
<dbReference type="NCBIfam" id="TIGR01012">
    <property type="entry name" value="uS2_euk_arch"/>
    <property type="match status" value="1"/>
</dbReference>
<dbReference type="PANTHER" id="PTHR11489">
    <property type="entry name" value="40S RIBOSOMAL PROTEIN SA"/>
    <property type="match status" value="1"/>
</dbReference>
<dbReference type="Pfam" id="PF00318">
    <property type="entry name" value="Ribosomal_S2"/>
    <property type="match status" value="1"/>
</dbReference>
<dbReference type="PRINTS" id="PR00395">
    <property type="entry name" value="RIBOSOMALS2"/>
</dbReference>
<dbReference type="SUPFAM" id="SSF52313">
    <property type="entry name" value="Ribosomal protein S2"/>
    <property type="match status" value="1"/>
</dbReference>
<dbReference type="PROSITE" id="PS00963">
    <property type="entry name" value="RIBOSOMAL_S2_2"/>
    <property type="match status" value="1"/>
</dbReference>
<feature type="chain" id="PRO_0000371615" description="Small ribosomal subunit protein uS2">
    <location>
        <begin position="1"/>
        <end position="246"/>
    </location>
</feature>
<feature type="strand" evidence="3">
    <location>
        <begin position="9"/>
        <end position="12"/>
    </location>
</feature>
<feature type="helix" evidence="3">
    <location>
        <begin position="17"/>
        <end position="23"/>
    </location>
</feature>
<feature type="turn" evidence="3">
    <location>
        <begin position="24"/>
        <end position="27"/>
    </location>
</feature>
<feature type="helix" evidence="3">
    <location>
        <begin position="38"/>
        <end position="40"/>
    </location>
</feature>
<feature type="strand" evidence="3">
    <location>
        <begin position="41"/>
        <end position="44"/>
    </location>
</feature>
<feature type="strand" evidence="3">
    <location>
        <begin position="50"/>
        <end position="52"/>
    </location>
</feature>
<feature type="helix" evidence="3">
    <location>
        <begin position="54"/>
        <end position="68"/>
    </location>
</feature>
<feature type="helix" evidence="3">
    <location>
        <begin position="74"/>
        <end position="76"/>
    </location>
</feature>
<feature type="strand" evidence="3">
    <location>
        <begin position="77"/>
        <end position="83"/>
    </location>
</feature>
<feature type="turn" evidence="3">
    <location>
        <begin position="84"/>
        <end position="86"/>
    </location>
</feature>
<feature type="helix" evidence="3">
    <location>
        <begin position="87"/>
        <end position="97"/>
    </location>
</feature>
<feature type="strand" evidence="3">
    <location>
        <begin position="100"/>
        <end position="104"/>
    </location>
</feature>
<feature type="turn" evidence="3">
    <location>
        <begin position="108"/>
        <end position="112"/>
    </location>
</feature>
<feature type="strand" evidence="3">
    <location>
        <begin position="123"/>
        <end position="128"/>
    </location>
</feature>
<feature type="turn" evidence="3">
    <location>
        <begin position="130"/>
        <end position="133"/>
    </location>
</feature>
<feature type="helix" evidence="3">
    <location>
        <begin position="134"/>
        <end position="140"/>
    </location>
</feature>
<feature type="turn" evidence="3">
    <location>
        <begin position="141"/>
        <end position="144"/>
    </location>
</feature>
<feature type="strand" evidence="3">
    <location>
        <begin position="147"/>
        <end position="151"/>
    </location>
</feature>
<feature type="strand" evidence="3">
    <location>
        <begin position="161"/>
        <end position="166"/>
    </location>
</feature>
<feature type="helix" evidence="3">
    <location>
        <begin position="173"/>
        <end position="189"/>
    </location>
</feature>
<feature type="strand" evidence="3">
    <location>
        <begin position="194"/>
        <end position="196"/>
    </location>
</feature>
<feature type="helix" evidence="3">
    <location>
        <begin position="202"/>
        <end position="205"/>
    </location>
</feature>
<proteinExistence type="evidence at protein level"/>
<keyword id="KW-0002">3D-structure</keyword>
<keyword id="KW-0963">Cytoplasm</keyword>
<keyword id="KW-1185">Reference proteome</keyword>
<keyword id="KW-0687">Ribonucleoprotein</keyword>
<keyword id="KW-0689">Ribosomal protein</keyword>
<comment type="function">
    <text evidence="1">Required for the assembly and/or stability of the 40S ribosomal subunit. Required for the processing of the 20S rRNA-precursor to mature 18S rRNA in a late step of the maturation of 40S ribosomal subunits.</text>
</comment>
<comment type="subunit">
    <text evidence="1">Component of the small ribosomal subunit. Mature ribosomes consist of a small (40S) and a large (60S) subunit. The 40S subunit contains about 33 different proteins and 1 molecule of RNA (18S). The 60S subunit contains about 49 different proteins and 3 molecules of RNA (25S, 5.8S and 5S). Interacts with ribosomal protein S21.</text>
</comment>
<comment type="subcellular location">
    <subcellularLocation>
        <location evidence="1">Cytoplasm</location>
    </subcellularLocation>
</comment>
<comment type="similarity">
    <text evidence="1">Belongs to the universal ribosomal protein uS2 family.</text>
</comment>
<reference key="1">
    <citation type="journal article" date="2007" name="Nat. Genet.">
        <title>Comparative genomic analysis of three Leishmania species that cause diverse human disease.</title>
        <authorList>
            <person name="Peacock C.S."/>
            <person name="Seeger K."/>
            <person name="Harris D."/>
            <person name="Murphy L."/>
            <person name="Ruiz J.C."/>
            <person name="Quail M.A."/>
            <person name="Peters N."/>
            <person name="Adlem E."/>
            <person name="Tivey A."/>
            <person name="Aslett M."/>
            <person name="Kerhornou A."/>
            <person name="Ivens A."/>
            <person name="Fraser A."/>
            <person name="Rajandream M.-A."/>
            <person name="Carver T."/>
            <person name="Norbertczak H."/>
            <person name="Chillingworth T."/>
            <person name="Hance Z."/>
            <person name="Jagels K."/>
            <person name="Moule S."/>
            <person name="Ormond D."/>
            <person name="Rutter S."/>
            <person name="Sqaures R."/>
            <person name="Whitehead S."/>
            <person name="Rabbinowitsch E."/>
            <person name="Arrowsmith C."/>
            <person name="White B."/>
            <person name="Thurston S."/>
            <person name="Bringaud F."/>
            <person name="Baldauf S.L."/>
            <person name="Faulconbridge A."/>
            <person name="Jeffares D."/>
            <person name="Depledge D.P."/>
            <person name="Oyola S.O."/>
            <person name="Hilley J.D."/>
            <person name="Brito L.O."/>
            <person name="Tosi L.R.O."/>
            <person name="Barrell B."/>
            <person name="Cruz A.K."/>
            <person name="Mottram J.C."/>
            <person name="Smith D.F."/>
            <person name="Berriman M."/>
        </authorList>
    </citation>
    <scope>NUCLEOTIDE SEQUENCE [LARGE SCALE GENOMIC DNA]</scope>
    <source>
        <strain>JPCM5</strain>
    </source>
</reference>
<protein>
    <recommendedName>
        <fullName evidence="1">Small ribosomal subunit protein uS2</fullName>
    </recommendedName>
    <alternativeName>
        <fullName evidence="2">40S ribosomal protein SA</fullName>
    </alternativeName>
</protein>
<name>RSSA_LEIIN</name>
<gene>
    <name type="ORF">LinJ36.5570</name>
    <name type="ORF">LinJ_36_5240</name>
</gene>
<gene>
    <name type="ORF">LinJ36.5680</name>
    <name type="ORF">LinJ_36_5350</name>
</gene>
<evidence type="ECO:0000255" key="1">
    <source>
        <dbReference type="HAMAP-Rule" id="MF_03015"/>
    </source>
</evidence>
<evidence type="ECO:0000305" key="2"/>
<evidence type="ECO:0007829" key="3">
    <source>
        <dbReference type="PDB" id="6AZ1"/>
    </source>
</evidence>
<sequence length="246" mass="27528">MTAVESGSKVLRMKESDAQKLLAMRCHIGTRNQSSAMKKYIYGRTAEGSHIIDLHMMWEKLILAARVIAAVENPKDVCVCSSRLYGTRAIYKFSQHVGTSFHGGRFIPGTFTNQIQKKFVQPRVLVVTDPRTDHQAIREASLVNIPVIALCDTDAPLEYVDIAIPCNNRGIKSIGMMYWLLAREVLRLRGTIVRSVPWEEKVDLFFYRDPNEAAEEKAAAAAAAPAAEAEEGFGWVERNDDNAWEA</sequence>
<organism>
    <name type="scientific">Leishmania infantum</name>
    <dbReference type="NCBI Taxonomy" id="5671"/>
    <lineage>
        <taxon>Eukaryota</taxon>
        <taxon>Discoba</taxon>
        <taxon>Euglenozoa</taxon>
        <taxon>Kinetoplastea</taxon>
        <taxon>Metakinetoplastina</taxon>
        <taxon>Trypanosomatida</taxon>
        <taxon>Trypanosomatidae</taxon>
        <taxon>Leishmaniinae</taxon>
        <taxon>Leishmania</taxon>
    </lineage>
</organism>
<accession>A4IDS4</accession>